<keyword id="KW-0560">Oxidoreductase</keyword>
<keyword id="KW-1185">Reference proteome</keyword>
<keyword id="KW-0816">Tricarboxylic acid cycle</keyword>
<evidence type="ECO:0000256" key="1">
    <source>
        <dbReference type="SAM" id="MobiDB-lite"/>
    </source>
</evidence>
<evidence type="ECO:0000269" key="2">
    <source>
    </source>
</evidence>
<comment type="function">
    <text evidence="2">Component of KG oxidoreductase (KOR) that catalyzes the CoA-dependent oxidative decarboxylation of 2-oxoglutarate (alpha-ketoglutarate, KG) to succinyl-CoA. Methyl viologen can act as electron acceptor in vitro; the physiologic electron acceptor is unknown. Is involved in the alternative TCA pathway that functions concurrently with fatty acid beta-oxidation. Since a growing body of evidence indicates that lipids (for example cholesterol and fatty acids) are a predominant growth substrate for M.tuberculosis during infection, flux through KOR likely represents an important step in intermediary metabolism in vivo. KOR-dependent decarboxylation of KG also appears to be an important source of CO(2) in M.tuberculosis metabolism.</text>
</comment>
<comment type="catalytic activity">
    <reaction evidence="2">
        <text>2 oxidized [2Fe-2S]-[ferredoxin] + 2-oxoglutarate + CoA = succinyl-CoA + 2 reduced [2Fe-2S]-[ferredoxin] + CO2 + H(+)</text>
        <dbReference type="Rhea" id="RHEA:17297"/>
        <dbReference type="Rhea" id="RHEA-COMP:10000"/>
        <dbReference type="Rhea" id="RHEA-COMP:10001"/>
        <dbReference type="ChEBI" id="CHEBI:15378"/>
        <dbReference type="ChEBI" id="CHEBI:16526"/>
        <dbReference type="ChEBI" id="CHEBI:16810"/>
        <dbReference type="ChEBI" id="CHEBI:33737"/>
        <dbReference type="ChEBI" id="CHEBI:33738"/>
        <dbReference type="ChEBI" id="CHEBI:57287"/>
        <dbReference type="ChEBI" id="CHEBI:57292"/>
        <dbReference type="EC" id="1.2.7.3"/>
    </reaction>
</comment>
<comment type="pathway">
    <text evidence="2">Carbohydrate metabolism; tricarboxylic acid cycle.</text>
</comment>
<comment type="subunit">
    <text evidence="2">KG oxidoreductase (KOR) is composed of KorA and KorB subunits.</text>
</comment>
<comment type="disruption phenotype">
    <text evidence="2">CoA-dependent KG oxidoreductase activity is absent in a mutant strain deleted for both genes korA and korB, and this strain is impaired for aerobic growth in the absence of sufficient amounts of CO(2). Inhibition of the glyoxylate shunt or exclusion of exogenous fatty acids alleviates this growth defect. Simultaneous disruption of korAB and kgd results in strict dependence upon the glyoxylate shunt for growth.</text>
</comment>
<comment type="miscellaneous">
    <text>Is extremely stable under aerobic conditions.</text>
</comment>
<gene>
    <name type="primary">korA</name>
    <name type="ordered locus">Rv2455c</name>
</gene>
<protein>
    <recommendedName>
        <fullName>2-oxoglutarate oxidoreductase subunit KorA</fullName>
        <ecNumber evidence="2">1.2.7.3</ecNumber>
    </recommendedName>
    <alternativeName>
        <fullName>Alpha-ketoglutarate oxidoreductase subunit alpha/gamma</fullName>
        <shortName>KG oxidoreductase subunit alpha/gamma</shortName>
        <shortName>KGO subunit alpha/gamma</shortName>
        <shortName>KOR subunit alpha/gamma</shortName>
    </alternativeName>
</protein>
<dbReference type="EC" id="1.2.7.3" evidence="2"/>
<dbReference type="EMBL" id="AL123456">
    <property type="protein sequence ID" value="CCP45248.1"/>
    <property type="molecule type" value="Genomic_DNA"/>
</dbReference>
<dbReference type="PIR" id="F70864">
    <property type="entry name" value="F70864"/>
</dbReference>
<dbReference type="RefSeq" id="NP_216971.1">
    <property type="nucleotide sequence ID" value="NC_000962.3"/>
</dbReference>
<dbReference type="RefSeq" id="WP_003412627.1">
    <property type="nucleotide sequence ID" value="NZ_NVQJ01000024.1"/>
</dbReference>
<dbReference type="SMR" id="O53182"/>
<dbReference type="FunCoup" id="O53182">
    <property type="interactions" value="127"/>
</dbReference>
<dbReference type="STRING" id="83332.Rv2455c"/>
<dbReference type="PaxDb" id="83332-Rv2455c"/>
<dbReference type="DNASU" id="887370"/>
<dbReference type="GeneID" id="887370"/>
<dbReference type="KEGG" id="mtu:Rv2455c"/>
<dbReference type="KEGG" id="mtv:RVBD_2455c"/>
<dbReference type="PATRIC" id="fig|83332.111.peg.2748"/>
<dbReference type="TubercuList" id="Rv2455c"/>
<dbReference type="eggNOG" id="COG0674">
    <property type="taxonomic scope" value="Bacteria"/>
</dbReference>
<dbReference type="eggNOG" id="COG1014">
    <property type="taxonomic scope" value="Bacteria"/>
</dbReference>
<dbReference type="InParanoid" id="O53182"/>
<dbReference type="OrthoDB" id="9794954at2"/>
<dbReference type="PhylomeDB" id="O53182"/>
<dbReference type="BioCyc" id="MetaCyc:G185E-6687-MONOMER"/>
<dbReference type="UniPathway" id="UPA00223"/>
<dbReference type="Proteomes" id="UP000001584">
    <property type="component" value="Chromosome"/>
</dbReference>
<dbReference type="GO" id="GO:0009274">
    <property type="term" value="C:peptidoglycan-based cell wall"/>
    <property type="evidence" value="ECO:0007005"/>
    <property type="project" value="MTBBASE"/>
</dbReference>
<dbReference type="GO" id="GO:0005886">
    <property type="term" value="C:plasma membrane"/>
    <property type="evidence" value="ECO:0007005"/>
    <property type="project" value="MTBBASE"/>
</dbReference>
<dbReference type="GO" id="GO:0047553">
    <property type="term" value="F:2-oxoglutarate synthase activity"/>
    <property type="evidence" value="ECO:0007669"/>
    <property type="project" value="UniProtKB-EC"/>
</dbReference>
<dbReference type="GO" id="GO:0000287">
    <property type="term" value="F:magnesium ion binding"/>
    <property type="evidence" value="ECO:0007669"/>
    <property type="project" value="UniProtKB-ARBA"/>
</dbReference>
<dbReference type="GO" id="GO:0006979">
    <property type="term" value="P:response to oxidative stress"/>
    <property type="evidence" value="ECO:0000318"/>
    <property type="project" value="GO_Central"/>
</dbReference>
<dbReference type="GO" id="GO:0006099">
    <property type="term" value="P:tricarboxylic acid cycle"/>
    <property type="evidence" value="ECO:0007669"/>
    <property type="project" value="UniProtKB-UniPathway"/>
</dbReference>
<dbReference type="CDD" id="cd07034">
    <property type="entry name" value="TPP_PYR_PFOR_IOR-alpha_like"/>
    <property type="match status" value="1"/>
</dbReference>
<dbReference type="FunFam" id="3.40.50.970:FF:000022">
    <property type="entry name" value="2-oxoglutarate ferredoxin oxidoreductase alpha subunit"/>
    <property type="match status" value="1"/>
</dbReference>
<dbReference type="FunFam" id="3.40.50.920:FF:000009">
    <property type="entry name" value="2-oxoglutarate ferredoxin oxidoreductase subunit alpha"/>
    <property type="match status" value="1"/>
</dbReference>
<dbReference type="FunFam" id="3.40.920.10:FF:000002">
    <property type="entry name" value="2-oxoglutarate oxidoreductase, alpha subunit"/>
    <property type="match status" value="1"/>
</dbReference>
<dbReference type="Gene3D" id="3.40.50.920">
    <property type="match status" value="1"/>
</dbReference>
<dbReference type="Gene3D" id="3.40.50.970">
    <property type="match status" value="1"/>
</dbReference>
<dbReference type="Gene3D" id="3.40.920.10">
    <property type="entry name" value="Pyruvate-ferredoxin oxidoreductase, PFOR, domain III"/>
    <property type="match status" value="1"/>
</dbReference>
<dbReference type="InterPro" id="IPR022367">
    <property type="entry name" value="2-oxoacid/accept_OxRdtase_asu"/>
</dbReference>
<dbReference type="InterPro" id="IPR033412">
    <property type="entry name" value="PFOR_II"/>
</dbReference>
<dbReference type="InterPro" id="IPR050722">
    <property type="entry name" value="Pyruvate:ferred/Flavod_OxRd"/>
</dbReference>
<dbReference type="InterPro" id="IPR019752">
    <property type="entry name" value="Pyrv/ketoisovalerate_OxRed_cat"/>
</dbReference>
<dbReference type="InterPro" id="IPR002880">
    <property type="entry name" value="Pyrv_Fd/Flavodoxin_OxRdtase_N"/>
</dbReference>
<dbReference type="InterPro" id="IPR002869">
    <property type="entry name" value="Pyrv_flavodox_OxRed_cen"/>
</dbReference>
<dbReference type="InterPro" id="IPR029061">
    <property type="entry name" value="THDP-binding"/>
</dbReference>
<dbReference type="InterPro" id="IPR009014">
    <property type="entry name" value="Transketo_C/PFOR_II"/>
</dbReference>
<dbReference type="NCBIfam" id="TIGR03710">
    <property type="entry name" value="OAFO_sf"/>
    <property type="match status" value="1"/>
</dbReference>
<dbReference type="PANTHER" id="PTHR32154:SF20">
    <property type="entry name" value="2-OXOGLUTARATE OXIDOREDUCTASE SUBUNIT KORA"/>
    <property type="match status" value="1"/>
</dbReference>
<dbReference type="PANTHER" id="PTHR32154">
    <property type="entry name" value="PYRUVATE-FLAVODOXIN OXIDOREDUCTASE-RELATED"/>
    <property type="match status" value="1"/>
</dbReference>
<dbReference type="Pfam" id="PF17147">
    <property type="entry name" value="PFOR_II"/>
    <property type="match status" value="1"/>
</dbReference>
<dbReference type="Pfam" id="PF01558">
    <property type="entry name" value="POR"/>
    <property type="match status" value="1"/>
</dbReference>
<dbReference type="Pfam" id="PF01855">
    <property type="entry name" value="POR_N"/>
    <property type="match status" value="1"/>
</dbReference>
<dbReference type="SUPFAM" id="SSF53323">
    <property type="entry name" value="Pyruvate-ferredoxin oxidoreductase, PFOR, domain III"/>
    <property type="match status" value="1"/>
</dbReference>
<dbReference type="SUPFAM" id="SSF52518">
    <property type="entry name" value="Thiamin diphosphate-binding fold (THDP-binding)"/>
    <property type="match status" value="1"/>
</dbReference>
<dbReference type="SUPFAM" id="SSF52922">
    <property type="entry name" value="TK C-terminal domain-like"/>
    <property type="match status" value="1"/>
</dbReference>
<feature type="chain" id="PRO_0000420516" description="2-oxoglutarate oxidoreductase subunit KorA">
    <location>
        <begin position="1"/>
        <end position="653"/>
    </location>
</feature>
<feature type="region of interest" description="Disordered" evidence="1">
    <location>
        <begin position="1"/>
        <end position="21"/>
    </location>
</feature>
<feature type="compositionally biased region" description="Basic and acidic residues" evidence="1">
    <location>
        <begin position="11"/>
        <end position="21"/>
    </location>
</feature>
<reference key="1">
    <citation type="journal article" date="1998" name="Nature">
        <title>Deciphering the biology of Mycobacterium tuberculosis from the complete genome sequence.</title>
        <authorList>
            <person name="Cole S.T."/>
            <person name="Brosch R."/>
            <person name="Parkhill J."/>
            <person name="Garnier T."/>
            <person name="Churcher C.M."/>
            <person name="Harris D.E."/>
            <person name="Gordon S.V."/>
            <person name="Eiglmeier K."/>
            <person name="Gas S."/>
            <person name="Barry C.E. III"/>
            <person name="Tekaia F."/>
            <person name="Badcock K."/>
            <person name="Basham D."/>
            <person name="Brown D."/>
            <person name="Chillingworth T."/>
            <person name="Connor R."/>
            <person name="Davies R.M."/>
            <person name="Devlin K."/>
            <person name="Feltwell T."/>
            <person name="Gentles S."/>
            <person name="Hamlin N."/>
            <person name="Holroyd S."/>
            <person name="Hornsby T."/>
            <person name="Jagels K."/>
            <person name="Krogh A."/>
            <person name="McLean J."/>
            <person name="Moule S."/>
            <person name="Murphy L.D."/>
            <person name="Oliver S."/>
            <person name="Osborne J."/>
            <person name="Quail M.A."/>
            <person name="Rajandream M.A."/>
            <person name="Rogers J."/>
            <person name="Rutter S."/>
            <person name="Seeger K."/>
            <person name="Skelton S."/>
            <person name="Squares S."/>
            <person name="Squares R."/>
            <person name="Sulston J.E."/>
            <person name="Taylor K."/>
            <person name="Whitehead S."/>
            <person name="Barrell B.G."/>
        </authorList>
    </citation>
    <scope>NUCLEOTIDE SEQUENCE [LARGE SCALE GENOMIC DNA]</scope>
    <source>
        <strain>ATCC 25618 / H37Rv</strain>
    </source>
</reference>
<reference key="2">
    <citation type="journal article" date="2009" name="PLoS Pathog.">
        <title>An anaerobic-type alpha-ketoglutarate ferredoxin oxidoreductase completes the oxidative tricarboxylic acid cycle of Mycobacterium tuberculosis.</title>
        <authorList>
            <person name="Baughn A.D."/>
            <person name="Garforth S.J."/>
            <person name="Vilcheze C."/>
            <person name="Jacobs W.R. Jr."/>
        </authorList>
    </citation>
    <scope>FUNCTION</scope>
    <scope>CATALYTIC ACTIVITY</scope>
    <scope>PATHWAY</scope>
    <scope>ROLE IN TCA CYCLE</scope>
    <scope>GENE NAME</scope>
    <scope>SUBUNIT</scope>
    <scope>DISRUPTION PHENOTYPE</scope>
    <source>
        <strain>ATCC 25618 / H37Rv</strain>
    </source>
</reference>
<reference key="3">
    <citation type="journal article" date="2011" name="Mol. Cell. Proteomics">
        <title>Proteogenomic analysis of Mycobacterium tuberculosis by high resolution mass spectrometry.</title>
        <authorList>
            <person name="Kelkar D.S."/>
            <person name="Kumar D."/>
            <person name="Kumar P."/>
            <person name="Balakrishnan L."/>
            <person name="Muthusamy B."/>
            <person name="Yadav A.K."/>
            <person name="Shrivastava P."/>
            <person name="Marimuthu A."/>
            <person name="Anand S."/>
            <person name="Sundaram H."/>
            <person name="Kingsbury R."/>
            <person name="Harsha H.C."/>
            <person name="Nair B."/>
            <person name="Prasad T.S."/>
            <person name="Chauhan D.S."/>
            <person name="Katoch K."/>
            <person name="Katoch V.M."/>
            <person name="Kumar P."/>
            <person name="Chaerkady R."/>
            <person name="Ramachandran S."/>
            <person name="Dash D."/>
            <person name="Pandey A."/>
        </authorList>
    </citation>
    <scope>IDENTIFICATION BY MASS SPECTROMETRY [LARGE SCALE ANALYSIS]</scope>
    <source>
        <strain>ATCC 25618 / H37Rv</strain>
    </source>
</reference>
<name>KORA_MYCTU</name>
<accession>O53182</accession>
<accession>F2GHL4</accession>
<accession>L0TCE2</accession>
<organism>
    <name type="scientific">Mycobacterium tuberculosis (strain ATCC 25618 / H37Rv)</name>
    <dbReference type="NCBI Taxonomy" id="83332"/>
    <lineage>
        <taxon>Bacteria</taxon>
        <taxon>Bacillati</taxon>
        <taxon>Actinomycetota</taxon>
        <taxon>Actinomycetes</taxon>
        <taxon>Mycobacteriales</taxon>
        <taxon>Mycobacteriaceae</taxon>
        <taxon>Mycobacterium</taxon>
        <taxon>Mycobacterium tuberculosis complex</taxon>
    </lineage>
</organism>
<proteinExistence type="evidence at protein level"/>
<sequence length="653" mass="69182">MDPNGSGAGPESHDAAFHAAPDRQRLENVVIRFAGDSGDGMQLTGDRFTSEAALFGNDLATQPNYPAEIRAPAGTLPGVSSFQIQIADYDILTAGDRPDVLVAMNPAALKANIGDLPLGGMVIVNSDEFTKRNLTKVGYVTNPLESGELSDYVVHTVAMTTLTLGAVEAIGASKKDGQRAKNMFALGLLSWMYGRELEHSEAFIREKFARKPEIAEANVLALKAGWNYGETTEAFGTTYEIPPATLPPGEYRQISGNTALAYGIVVAGQLAGLPVVLGSYPITPASDILHELSKHKNFNVVTFQAEDEIGGICAALGAAYGGALGVTSTSGPGISLKSEALGLGVMTELPLLVIDVQRGGPSTGLPTKTEQADLLQALYGRNGESPVAVLAPRSPADCFETALEAVRIAVSYHTPVILLSDGAIANGSEPWRIPDVNALPPIKHTFAKPGEPFQPYARDRETLARQFAIPGTPGLEHRIGGLEAANGSGDISYEPTNHDLMVRLRQAKIDGIHVPDLEVDDPTGDAELLLIGWGSSYGPIGEACRRARRRGTKVAHAHLRYLNPFPANLGEVLRRYPKVVAPELNLGQLAQVLRGKYLVDVQSVTKVKGVSFLADEIGRFIRAALAGRLAELEQDKTLVARLSAATAGAGANG</sequence>